<accession>Q8XS05</accession>
<dbReference type="EC" id="2.1.1.14" evidence="1"/>
<dbReference type="EMBL" id="AL646053">
    <property type="protein sequence ID" value="CAD17827.1"/>
    <property type="molecule type" value="Genomic_DNA"/>
</dbReference>
<dbReference type="RefSeq" id="WP_011003974.1">
    <property type="nucleotide sequence ID" value="NC_003296.1"/>
</dbReference>
<dbReference type="SMR" id="Q8XS05"/>
<dbReference type="STRING" id="267608.RSp0676"/>
<dbReference type="EnsemblBacteria" id="CAD17827">
    <property type="protein sequence ID" value="CAD17827"/>
    <property type="gene ID" value="RSp0676"/>
</dbReference>
<dbReference type="KEGG" id="rso:RSp0676"/>
<dbReference type="PATRIC" id="fig|267608.8.peg.4149"/>
<dbReference type="eggNOG" id="COG0620">
    <property type="taxonomic scope" value="Bacteria"/>
</dbReference>
<dbReference type="HOGENOM" id="CLU_013175_0_0_4"/>
<dbReference type="UniPathway" id="UPA00051">
    <property type="reaction ID" value="UER00082"/>
</dbReference>
<dbReference type="Proteomes" id="UP000001436">
    <property type="component" value="Plasmid megaplasmid Rsp"/>
</dbReference>
<dbReference type="GO" id="GO:0003871">
    <property type="term" value="F:5-methyltetrahydropteroyltriglutamate-homocysteine S-methyltransferase activity"/>
    <property type="evidence" value="ECO:0007669"/>
    <property type="project" value="UniProtKB-UniRule"/>
</dbReference>
<dbReference type="GO" id="GO:0008270">
    <property type="term" value="F:zinc ion binding"/>
    <property type="evidence" value="ECO:0007669"/>
    <property type="project" value="InterPro"/>
</dbReference>
<dbReference type="GO" id="GO:0009086">
    <property type="term" value="P:methionine biosynthetic process"/>
    <property type="evidence" value="ECO:0007669"/>
    <property type="project" value="UniProtKB-UniRule"/>
</dbReference>
<dbReference type="GO" id="GO:0032259">
    <property type="term" value="P:methylation"/>
    <property type="evidence" value="ECO:0007669"/>
    <property type="project" value="UniProtKB-KW"/>
</dbReference>
<dbReference type="CDD" id="cd03311">
    <property type="entry name" value="CIMS_C_terminal_like"/>
    <property type="match status" value="1"/>
</dbReference>
<dbReference type="CDD" id="cd03312">
    <property type="entry name" value="CIMS_N_terminal_like"/>
    <property type="match status" value="1"/>
</dbReference>
<dbReference type="FunFam" id="3.20.20.210:FF:000002">
    <property type="entry name" value="5-methyltetrahydropteroyltriglutamate--homocysteine methyltransferase"/>
    <property type="match status" value="1"/>
</dbReference>
<dbReference type="Gene3D" id="3.20.20.210">
    <property type="match status" value="2"/>
</dbReference>
<dbReference type="HAMAP" id="MF_00172">
    <property type="entry name" value="Meth_synth"/>
    <property type="match status" value="1"/>
</dbReference>
<dbReference type="InterPro" id="IPR013215">
    <property type="entry name" value="Cbl-indep_Met_Synth_N"/>
</dbReference>
<dbReference type="InterPro" id="IPR006276">
    <property type="entry name" value="Cobalamin-indep_Met_synthase"/>
</dbReference>
<dbReference type="InterPro" id="IPR002629">
    <property type="entry name" value="Met_Synth_C/arc"/>
</dbReference>
<dbReference type="InterPro" id="IPR038071">
    <property type="entry name" value="UROD/MetE-like_sf"/>
</dbReference>
<dbReference type="NCBIfam" id="TIGR01371">
    <property type="entry name" value="met_syn_B12ind"/>
    <property type="match status" value="1"/>
</dbReference>
<dbReference type="NCBIfam" id="NF003556">
    <property type="entry name" value="PRK05222.1"/>
    <property type="match status" value="1"/>
</dbReference>
<dbReference type="PANTHER" id="PTHR30519">
    <property type="entry name" value="5-METHYLTETRAHYDROPTEROYLTRIGLUTAMATE--HOMOCYSTEINE METHYLTRANSFERASE"/>
    <property type="match status" value="1"/>
</dbReference>
<dbReference type="Pfam" id="PF08267">
    <property type="entry name" value="Meth_synt_1"/>
    <property type="match status" value="1"/>
</dbReference>
<dbReference type="Pfam" id="PF01717">
    <property type="entry name" value="Meth_synt_2"/>
    <property type="match status" value="1"/>
</dbReference>
<dbReference type="PIRSF" id="PIRSF000382">
    <property type="entry name" value="MeTrfase_B12_ind"/>
    <property type="match status" value="1"/>
</dbReference>
<dbReference type="SUPFAM" id="SSF51726">
    <property type="entry name" value="UROD/MetE-like"/>
    <property type="match status" value="2"/>
</dbReference>
<protein>
    <recommendedName>
        <fullName evidence="1">5-methyltetrahydropteroyltriglutamate--homocysteine methyltransferase</fullName>
        <ecNumber evidence="1">2.1.1.14</ecNumber>
    </recommendedName>
    <alternativeName>
        <fullName evidence="1">Cobalamin-independent methionine synthase</fullName>
    </alternativeName>
    <alternativeName>
        <fullName evidence="1">Methionine synthase, vitamin-B12 independent isozyme</fullName>
    </alternativeName>
</protein>
<geneLocation type="plasmid">
    <name>megaplasmid Rsp</name>
</geneLocation>
<proteinExistence type="inferred from homology"/>
<feature type="chain" id="PRO_0000098651" description="5-methyltetrahydropteroyltriglutamate--homocysteine methyltransferase">
    <location>
        <begin position="1"/>
        <end position="776"/>
    </location>
</feature>
<feature type="region of interest" description="Disordered" evidence="2">
    <location>
        <begin position="755"/>
        <end position="776"/>
    </location>
</feature>
<feature type="compositionally biased region" description="Basic and acidic residues" evidence="2">
    <location>
        <begin position="767"/>
        <end position="776"/>
    </location>
</feature>
<feature type="active site" description="Proton donor" evidence="1">
    <location>
        <position position="695"/>
    </location>
</feature>
<feature type="binding site" evidence="1">
    <location>
        <begin position="16"/>
        <end position="19"/>
    </location>
    <ligand>
        <name>5-methyltetrahydropteroyltri-L-glutamate</name>
        <dbReference type="ChEBI" id="CHEBI:58207"/>
    </ligand>
</feature>
<feature type="binding site" evidence="1">
    <location>
        <position position="112"/>
    </location>
    <ligand>
        <name>5-methyltetrahydropteroyltri-L-glutamate</name>
        <dbReference type="ChEBI" id="CHEBI:58207"/>
    </ligand>
</feature>
<feature type="binding site" evidence="1">
    <location>
        <begin position="432"/>
        <end position="434"/>
    </location>
    <ligand>
        <name>L-homocysteine</name>
        <dbReference type="ChEBI" id="CHEBI:58199"/>
    </ligand>
</feature>
<feature type="binding site" evidence="1">
    <location>
        <begin position="432"/>
        <end position="434"/>
    </location>
    <ligand>
        <name>L-methionine</name>
        <dbReference type="ChEBI" id="CHEBI:57844"/>
    </ligand>
</feature>
<feature type="binding site" evidence="1">
    <location>
        <position position="485"/>
    </location>
    <ligand>
        <name>L-homocysteine</name>
        <dbReference type="ChEBI" id="CHEBI:58199"/>
    </ligand>
</feature>
<feature type="binding site" evidence="1">
    <location>
        <position position="485"/>
    </location>
    <ligand>
        <name>L-methionine</name>
        <dbReference type="ChEBI" id="CHEBI:57844"/>
    </ligand>
</feature>
<feature type="binding site" evidence="1">
    <location>
        <begin position="516"/>
        <end position="517"/>
    </location>
    <ligand>
        <name>5-methyltetrahydropteroyltri-L-glutamate</name>
        <dbReference type="ChEBI" id="CHEBI:58207"/>
    </ligand>
</feature>
<feature type="binding site" evidence="1">
    <location>
        <position position="562"/>
    </location>
    <ligand>
        <name>5-methyltetrahydropteroyltri-L-glutamate</name>
        <dbReference type="ChEBI" id="CHEBI:58207"/>
    </ligand>
</feature>
<feature type="binding site" evidence="1">
    <location>
        <position position="600"/>
    </location>
    <ligand>
        <name>L-homocysteine</name>
        <dbReference type="ChEBI" id="CHEBI:58199"/>
    </ligand>
</feature>
<feature type="binding site" evidence="1">
    <location>
        <position position="600"/>
    </location>
    <ligand>
        <name>L-methionine</name>
        <dbReference type="ChEBI" id="CHEBI:57844"/>
    </ligand>
</feature>
<feature type="binding site" evidence="1">
    <location>
        <position position="606"/>
    </location>
    <ligand>
        <name>5-methyltetrahydropteroyltri-L-glutamate</name>
        <dbReference type="ChEBI" id="CHEBI:58207"/>
    </ligand>
</feature>
<feature type="binding site" evidence="1">
    <location>
        <position position="642"/>
    </location>
    <ligand>
        <name>Zn(2+)</name>
        <dbReference type="ChEBI" id="CHEBI:29105"/>
        <note>catalytic</note>
    </ligand>
</feature>
<feature type="binding site" evidence="1">
    <location>
        <position position="644"/>
    </location>
    <ligand>
        <name>Zn(2+)</name>
        <dbReference type="ChEBI" id="CHEBI:29105"/>
        <note>catalytic</note>
    </ligand>
</feature>
<feature type="binding site" evidence="1">
    <location>
        <position position="666"/>
    </location>
    <ligand>
        <name>Zn(2+)</name>
        <dbReference type="ChEBI" id="CHEBI:29105"/>
        <note>catalytic</note>
    </ligand>
</feature>
<feature type="binding site" evidence="1">
    <location>
        <position position="727"/>
    </location>
    <ligand>
        <name>Zn(2+)</name>
        <dbReference type="ChEBI" id="CHEBI:29105"/>
        <note>catalytic</note>
    </ligand>
</feature>
<reference key="1">
    <citation type="journal article" date="2002" name="Nature">
        <title>Genome sequence of the plant pathogen Ralstonia solanacearum.</title>
        <authorList>
            <person name="Salanoubat M."/>
            <person name="Genin S."/>
            <person name="Artiguenave F."/>
            <person name="Gouzy J."/>
            <person name="Mangenot S."/>
            <person name="Arlat M."/>
            <person name="Billault A."/>
            <person name="Brottier P."/>
            <person name="Camus J.-C."/>
            <person name="Cattolico L."/>
            <person name="Chandler M."/>
            <person name="Choisne N."/>
            <person name="Claudel-Renard C."/>
            <person name="Cunnac S."/>
            <person name="Demange N."/>
            <person name="Gaspin C."/>
            <person name="Lavie M."/>
            <person name="Moisan A."/>
            <person name="Robert C."/>
            <person name="Saurin W."/>
            <person name="Schiex T."/>
            <person name="Siguier P."/>
            <person name="Thebault P."/>
            <person name="Whalen M."/>
            <person name="Wincker P."/>
            <person name="Levy M."/>
            <person name="Weissenbach J."/>
            <person name="Boucher C.A."/>
        </authorList>
    </citation>
    <scope>NUCLEOTIDE SEQUENCE [LARGE SCALE GENOMIC DNA]</scope>
    <source>
        <strain>ATCC BAA-1114 / GMI1000</strain>
    </source>
</reference>
<comment type="function">
    <text evidence="1">Catalyzes the transfer of a methyl group from 5-methyltetrahydrofolate to homocysteine resulting in methionine formation.</text>
</comment>
<comment type="catalytic activity">
    <reaction evidence="1">
        <text>5-methyltetrahydropteroyltri-L-glutamate + L-homocysteine = tetrahydropteroyltri-L-glutamate + L-methionine</text>
        <dbReference type="Rhea" id="RHEA:21196"/>
        <dbReference type="ChEBI" id="CHEBI:57844"/>
        <dbReference type="ChEBI" id="CHEBI:58140"/>
        <dbReference type="ChEBI" id="CHEBI:58199"/>
        <dbReference type="ChEBI" id="CHEBI:58207"/>
        <dbReference type="EC" id="2.1.1.14"/>
    </reaction>
</comment>
<comment type="cofactor">
    <cofactor evidence="1">
        <name>Zn(2+)</name>
        <dbReference type="ChEBI" id="CHEBI:29105"/>
    </cofactor>
    <text evidence="1">Binds 1 zinc ion per subunit.</text>
</comment>
<comment type="pathway">
    <text evidence="1">Amino-acid biosynthesis; L-methionine biosynthesis via de novo pathway; L-methionine from L-homocysteine (MetE route): step 1/1.</text>
</comment>
<comment type="similarity">
    <text evidence="1">Belongs to the vitamin-B12 independent methionine synthase family.</text>
</comment>
<name>METE_RALN1</name>
<evidence type="ECO:0000255" key="1">
    <source>
        <dbReference type="HAMAP-Rule" id="MF_00172"/>
    </source>
</evidence>
<evidence type="ECO:0000256" key="2">
    <source>
        <dbReference type="SAM" id="MobiDB-lite"/>
    </source>
</evidence>
<gene>
    <name evidence="1" type="primary">metE</name>
    <name type="ordered locus">RSp0676</name>
    <name type="ORF">RS01773</name>
</gene>
<organism>
    <name type="scientific">Ralstonia nicotianae (strain ATCC BAA-1114 / GMI1000)</name>
    <name type="common">Ralstonia solanacearum</name>
    <dbReference type="NCBI Taxonomy" id="267608"/>
    <lineage>
        <taxon>Bacteria</taxon>
        <taxon>Pseudomonadati</taxon>
        <taxon>Pseudomonadota</taxon>
        <taxon>Betaproteobacteria</taxon>
        <taxon>Burkholderiales</taxon>
        <taxon>Burkholderiaceae</taxon>
        <taxon>Ralstonia</taxon>
        <taxon>Ralstonia solanacearum species complex</taxon>
    </lineage>
</organism>
<sequence>MTTIHTLGYPRIGAQRELKFALESFWKGASTEADLRDTGRALRERHWNAQRDAGLDFVTVGDFAWYDQVLQTAALLGALPTRYGFDPAQLTLAQSFVLARGNADHAAMEMTKWFDTNYHYLVPELTPDLRFGPGTGWLFDEVREAQAAGHRVKVALLGPVTFLHLAKARGGLADKLSLLPQLLPAYAAVLKRLAAEGVEWVQIDEPALVLDLPQAWSDAYGPAYATLAAAGGPRLLLATYFEAASHHAALIRSLPVAGVHLDLVRAPQQLEAFAPWPADKVLSAGVVDGRNIWRTDLEQALARVAPLAQTLGERLWLAPSCSLLHVPVDLAAETRLDDELKGWLAFARQKLDELAVLKRAVIDGRDAAHAALAGSAAAIASRAASRRVHNDSVKKRAAAIRAQDAERAAPYPVRAAAQQARLNLPLLPTTTIGSFPQTAEIRQARAQYKRGELQALTYLERMRAEIADVVQRQEALGLDMLVHGEAERNDMVEYFGELLWGYAFTANGWVQSYGSRCVKPPVIYGDVYRPEPMTVEWSRYAQSLTAKPMKGMLTGPVTMLQWSFVRDDQPREQTALQIALALRDEVRDLEAAGIAAIQIDEPAFREGLPLRAGDVAVYLEWAARVFRVSASGVRNDTQIHTHMCYSEFNDILPAIASMDADVITIETSRSNMELLDAFGEFAYPNEIGPGVYDIHSPRVPRVEEMEALLDKAAQVVPVQRLWVNPDCGLKTRGWPEVEAALRGMVEATRRLRARHAGAVHAGTPATRAEHAESALA</sequence>
<keyword id="KW-0028">Amino-acid biosynthesis</keyword>
<keyword id="KW-0479">Metal-binding</keyword>
<keyword id="KW-0486">Methionine biosynthesis</keyword>
<keyword id="KW-0489">Methyltransferase</keyword>
<keyword id="KW-0614">Plasmid</keyword>
<keyword id="KW-1185">Reference proteome</keyword>
<keyword id="KW-0677">Repeat</keyword>
<keyword id="KW-0808">Transferase</keyword>
<keyword id="KW-0862">Zinc</keyword>